<sequence>MDCVLRSYLLLAFGFLICLFLFCLVVFIWFVYKQILFRTTAQSNEARHNHSTVV</sequence>
<dbReference type="EMBL" id="X53462">
    <property type="protein sequence ID" value="CAA37550.1"/>
    <property type="molecule type" value="Genomic_RNA"/>
</dbReference>
<dbReference type="EMBL" id="X73476">
    <property type="protein sequence ID" value="CAA51864.1"/>
    <property type="molecule type" value="Genomic_RNA"/>
</dbReference>
<dbReference type="PIR" id="S28711">
    <property type="entry name" value="S28711"/>
</dbReference>
<dbReference type="RefSeq" id="NP_041871.1">
    <property type="nucleotide sequence ID" value="NC_001598.1"/>
</dbReference>
<dbReference type="SMR" id="Q08542"/>
<dbReference type="TCDB" id="9.B.308.3.2">
    <property type="family name" value="the lettuce infectious yellows virus p5 (liyv-p5) family"/>
</dbReference>
<dbReference type="KEGG" id="vg:1724785"/>
<dbReference type="Proteomes" id="UP000000359">
    <property type="component" value="Segment"/>
</dbReference>
<dbReference type="GO" id="GO:0044169">
    <property type="term" value="C:host cell rough endoplasmic reticulum membrane"/>
    <property type="evidence" value="ECO:0007669"/>
    <property type="project" value="UniProtKB-SubCell"/>
</dbReference>
<dbReference type="GO" id="GO:0016020">
    <property type="term" value="C:membrane"/>
    <property type="evidence" value="ECO:0007669"/>
    <property type="project" value="UniProtKB-KW"/>
</dbReference>
<dbReference type="GO" id="GO:0046740">
    <property type="term" value="P:transport of virus in host, cell to cell"/>
    <property type="evidence" value="ECO:0007669"/>
    <property type="project" value="UniProtKB-KW"/>
</dbReference>
<dbReference type="InterPro" id="IPR009591">
    <property type="entry name" value="Beet_yellows_virus_p6"/>
</dbReference>
<dbReference type="Pfam" id="PF06716">
    <property type="entry name" value="MP_p6"/>
    <property type="match status" value="1"/>
</dbReference>
<protein>
    <recommendedName>
        <fullName>Movement protein p6</fullName>
    </recommendedName>
    <alternativeName>
        <fullName>6 kDa protein</fullName>
        <shortName>p6</shortName>
    </alternativeName>
</protein>
<feature type="chain" id="PRO_0000312565" description="Movement protein p6">
    <location>
        <begin position="1"/>
        <end position="54"/>
    </location>
</feature>
<feature type="topological domain" description="Lumenal" evidence="5">
    <location>
        <begin position="1"/>
        <end position="10"/>
    </location>
</feature>
<feature type="transmembrane region" description="Helical" evidence="2">
    <location>
        <begin position="11"/>
        <end position="31"/>
    </location>
</feature>
<feature type="topological domain" description="Cytoplasmic" evidence="2">
    <location>
        <begin position="32"/>
        <end position="54"/>
    </location>
</feature>
<feature type="disulfide bond" description="Interchain" evidence="3">
    <location>
        <position position="3"/>
    </location>
</feature>
<feature type="mutagenesis site" description="Strong reduction of virus ability to move from cell to cell." evidence="3">
    <original>D</original>
    <variation>A</variation>
    <location>
        <position position="2"/>
    </location>
</feature>
<feature type="mutagenesis site" description="Complete loss of homodimerization. Complete loss of virus ability to move from cell to cell." evidence="3">
    <original>C</original>
    <variation>A</variation>
    <location>
        <position position="3"/>
    </location>
</feature>
<feature type="mutagenesis site" description="Strong reduction of virus ability to move from cell to cell." evidence="3">
    <original>R</original>
    <variation>A</variation>
    <location>
        <position position="6"/>
    </location>
</feature>
<feature type="mutagenesis site" description="Reduces virus ability to move from cell to cell." evidence="3">
    <original>G</original>
    <variation>A</variation>
    <location>
        <position position="14"/>
    </location>
</feature>
<feature type="mutagenesis site" description="No effect on homodimerization. Reduces virus ability to move from cell to cell." evidence="3">
    <original>C</original>
    <variation>A</variation>
    <location>
        <position position="18"/>
    </location>
</feature>
<feature type="mutagenesis site" description="No effect on homodimerization. Reduces virus ability to move from cell to cell." evidence="3">
    <original>C</original>
    <variation>A</variation>
    <location>
        <position position="23"/>
    </location>
</feature>
<feature type="mutagenesis site" description="Reduces virus ability to move from cell to cell." evidence="3">
    <original>W</original>
    <variation>A</variation>
    <location>
        <position position="29"/>
    </location>
</feature>
<feature type="mutagenesis site" description="Reduces virus ability to move from cell to cell." evidence="3">
    <original>K</original>
    <variation>A</variation>
    <location>
        <position position="33"/>
    </location>
</feature>
<feature type="mutagenesis site" description="Reduces virus ability to move from cell to cell." evidence="3">
    <original>R</original>
    <variation>A</variation>
    <location>
        <position position="38"/>
    </location>
</feature>
<feature type="mutagenesis site" description="Reduces virus ability to move from cell to cell." evidence="3">
    <original>E</original>
    <variation>A</variation>
    <location>
        <position position="45"/>
    </location>
</feature>
<feature type="mutagenesis site" description="Reduces virus ability to move from cell to cell." evidence="3">
    <original>R</original>
    <variation>A</variation>
    <location>
        <position position="47"/>
    </location>
</feature>
<feature type="mutagenesis site" description="Reduces virus ability to move from cell to cell." evidence="3">
    <original>H</original>
    <variation>A</variation>
    <location>
        <position position="50"/>
    </location>
</feature>
<feature type="mutagenesis site" description="Reduces virus ability to move from cell to cell." evidence="3">
    <original>V</original>
    <variation>A</variation>
    <location>
        <position position="54"/>
    </location>
</feature>
<gene>
    <name type="ORF">ORF2</name>
</gene>
<organism>
    <name type="scientific">Beet yellows virus (isolate Ukraine)</name>
    <name type="common">BYV</name>
    <name type="synonym">Sugar beet yellows virus</name>
    <dbReference type="NCBI Taxonomy" id="478555"/>
    <lineage>
        <taxon>Viruses</taxon>
        <taxon>Riboviria</taxon>
        <taxon>Orthornavirae</taxon>
        <taxon>Kitrinoviricota</taxon>
        <taxon>Alsuviricetes</taxon>
        <taxon>Martellivirales</taxon>
        <taxon>Closteroviridae</taxon>
        <taxon>Closterovirus</taxon>
        <taxon>Beet yellows virus</taxon>
    </lineage>
</organism>
<proteinExistence type="evidence at protein level"/>
<accession>Q08542</accession>
<reference key="1">
    <citation type="journal article" date="1991" name="J. Gen. Virol.">
        <title>Nucleotide sequence of the 3'-terminal half of beet yellows closterovirus RNA genome: unique arrangement of eight virus genes.</title>
        <authorList>
            <person name="Agranovsky A.A."/>
            <person name="Boyko V.P."/>
            <person name="Karasev A.V."/>
            <person name="Lunina N.A."/>
            <person name="Koonin E.V."/>
            <person name="Dolja V.V."/>
        </authorList>
    </citation>
    <scope>NUCLEOTIDE SEQUENCE [GENOMIC RNA]</scope>
</reference>
<reference key="2">
    <citation type="journal article" date="1994" name="Virology">
        <title>Beet yellows closterovirus: complete genome structure and identification of a leader papain-like thiol protease.</title>
        <authorList>
            <person name="Agranovsky A.A."/>
            <person name="Koonin E.V."/>
            <person name="Boyko V.P."/>
            <person name="Maiss E."/>
            <person name="Froetschl R."/>
            <person name="Lunina N.A."/>
            <person name="Atabekov J.G."/>
        </authorList>
    </citation>
    <scope>NUCLEOTIDE SEQUENCE [GENOMIC RNA]</scope>
</reference>
<reference key="3">
    <citation type="journal article" date="2004" name="J. Virol.">
        <title>Movement protein of a closterovirus is a type III integral transmembrane protein localized to the endoplasmic reticulum.</title>
        <authorList>
            <person name="Peremyslov V.V."/>
            <person name="Pan Y.-W."/>
            <person name="Dolja V.V."/>
        </authorList>
    </citation>
    <scope>FUNCTION</scope>
    <scope>SUBCELLULAR LOCATION</scope>
    <scope>SUBUNIT</scope>
    <scope>TOPOLOGY</scope>
    <scope>DISULFIDE BOND</scope>
    <scope>MUTAGENESIS OF ASP-2; CYS-3; ARG-6; GLY-14; CYS-18; CYS-23; TRP-29; LYS-33; ARG-38; GLU-45; ARG-47; HIS-50 AND VAL-54</scope>
</reference>
<evidence type="ECO:0000250" key="1"/>
<evidence type="ECO:0000255" key="2"/>
<evidence type="ECO:0000269" key="3">
    <source>
    </source>
</evidence>
<evidence type="ECO:0000305" key="4"/>
<evidence type="ECO:0000305" key="5">
    <source>
    </source>
</evidence>
<organismHost>
    <name type="scientific">Beta vulgaris</name>
    <name type="common">Sugar beet</name>
    <dbReference type="NCBI Taxonomy" id="161934"/>
</organismHost>
<keyword id="KW-1015">Disulfide bond</keyword>
<keyword id="KW-1038">Host endoplasmic reticulum</keyword>
<keyword id="KW-1043">Host membrane</keyword>
<keyword id="KW-0472">Membrane</keyword>
<keyword id="KW-1185">Reference proteome</keyword>
<keyword id="KW-0812">Transmembrane</keyword>
<keyword id="KW-1133">Transmembrane helix</keyword>
<keyword id="KW-0813">Transport</keyword>
<keyword id="KW-0916">Viral movement protein</keyword>
<name>MVP2_BYVU</name>
<comment type="function">
    <text evidence="1 3">Transports viral genome to neighboring plant cells directly through plasmosdesmata, without any budding. The movement protein allows efficient cell to cell propagation, by bypassing the host cell wall barrier. Two movement proteins, p6, Hsp70h and three structural proteins, CP, CPm, and P64 are essential for cell-cell movement. Also plays a role in virion formation. Together with CPm and p64, encapsidates the 5'-terminal portion of the viral genome (By similarity).</text>
</comment>
<comment type="subunit">
    <text evidence="3">Homodimer; disulfide-linked.</text>
</comment>
<comment type="subcellular location">
    <subcellularLocation>
        <location evidence="4">Host rough endoplasmic reticulum membrane</location>
        <topology evidence="4">Single-pass type III membrane protein</topology>
    </subcellularLocation>
</comment>